<dbReference type="EMBL" id="AE016827">
    <property type="protein sequence ID" value="AAU37506.1"/>
    <property type="status" value="ALT_INIT"/>
    <property type="molecule type" value="Genomic_DNA"/>
</dbReference>
<dbReference type="RefSeq" id="WP_041639657.1">
    <property type="nucleotide sequence ID" value="NC_006300.1"/>
</dbReference>
<dbReference type="SMR" id="Q65U54"/>
<dbReference type="STRING" id="221988.MS0899"/>
<dbReference type="KEGG" id="msu:MS0899"/>
<dbReference type="eggNOG" id="COG0484">
    <property type="taxonomic scope" value="Bacteria"/>
</dbReference>
<dbReference type="HOGENOM" id="CLU_017633_0_7_6"/>
<dbReference type="OrthoDB" id="9779889at2"/>
<dbReference type="Proteomes" id="UP000000607">
    <property type="component" value="Chromosome"/>
</dbReference>
<dbReference type="GO" id="GO:0005737">
    <property type="term" value="C:cytoplasm"/>
    <property type="evidence" value="ECO:0007669"/>
    <property type="project" value="UniProtKB-SubCell"/>
</dbReference>
<dbReference type="GO" id="GO:0005524">
    <property type="term" value="F:ATP binding"/>
    <property type="evidence" value="ECO:0007669"/>
    <property type="project" value="InterPro"/>
</dbReference>
<dbReference type="GO" id="GO:0031072">
    <property type="term" value="F:heat shock protein binding"/>
    <property type="evidence" value="ECO:0007669"/>
    <property type="project" value="InterPro"/>
</dbReference>
<dbReference type="GO" id="GO:0051082">
    <property type="term" value="F:unfolded protein binding"/>
    <property type="evidence" value="ECO:0007669"/>
    <property type="project" value="UniProtKB-UniRule"/>
</dbReference>
<dbReference type="GO" id="GO:0008270">
    <property type="term" value="F:zinc ion binding"/>
    <property type="evidence" value="ECO:0007669"/>
    <property type="project" value="UniProtKB-UniRule"/>
</dbReference>
<dbReference type="GO" id="GO:0051085">
    <property type="term" value="P:chaperone cofactor-dependent protein refolding"/>
    <property type="evidence" value="ECO:0007669"/>
    <property type="project" value="TreeGrafter"/>
</dbReference>
<dbReference type="GO" id="GO:0006260">
    <property type="term" value="P:DNA replication"/>
    <property type="evidence" value="ECO:0007669"/>
    <property type="project" value="UniProtKB-KW"/>
</dbReference>
<dbReference type="GO" id="GO:0042026">
    <property type="term" value="P:protein refolding"/>
    <property type="evidence" value="ECO:0007669"/>
    <property type="project" value="TreeGrafter"/>
</dbReference>
<dbReference type="GO" id="GO:0009408">
    <property type="term" value="P:response to heat"/>
    <property type="evidence" value="ECO:0007669"/>
    <property type="project" value="InterPro"/>
</dbReference>
<dbReference type="CDD" id="cd06257">
    <property type="entry name" value="DnaJ"/>
    <property type="match status" value="1"/>
</dbReference>
<dbReference type="CDD" id="cd10747">
    <property type="entry name" value="DnaJ_C"/>
    <property type="match status" value="1"/>
</dbReference>
<dbReference type="CDD" id="cd10719">
    <property type="entry name" value="DnaJ_zf"/>
    <property type="match status" value="1"/>
</dbReference>
<dbReference type="FunFam" id="1.10.287.110:FF:000031">
    <property type="entry name" value="Molecular chaperone DnaJ"/>
    <property type="match status" value="1"/>
</dbReference>
<dbReference type="FunFam" id="2.10.230.10:FF:000002">
    <property type="entry name" value="Molecular chaperone DnaJ"/>
    <property type="match status" value="1"/>
</dbReference>
<dbReference type="FunFam" id="2.60.260.20:FF:000004">
    <property type="entry name" value="Molecular chaperone DnaJ"/>
    <property type="match status" value="1"/>
</dbReference>
<dbReference type="Gene3D" id="1.10.287.110">
    <property type="entry name" value="DnaJ domain"/>
    <property type="match status" value="1"/>
</dbReference>
<dbReference type="Gene3D" id="2.10.230.10">
    <property type="entry name" value="Heat shock protein DnaJ, cysteine-rich domain"/>
    <property type="match status" value="1"/>
</dbReference>
<dbReference type="Gene3D" id="2.60.260.20">
    <property type="entry name" value="Urease metallochaperone UreE, N-terminal domain"/>
    <property type="match status" value="2"/>
</dbReference>
<dbReference type="HAMAP" id="MF_01152">
    <property type="entry name" value="DnaJ"/>
    <property type="match status" value="1"/>
</dbReference>
<dbReference type="InterPro" id="IPR012724">
    <property type="entry name" value="DnaJ"/>
</dbReference>
<dbReference type="InterPro" id="IPR002939">
    <property type="entry name" value="DnaJ_C"/>
</dbReference>
<dbReference type="InterPro" id="IPR001623">
    <property type="entry name" value="DnaJ_domain"/>
</dbReference>
<dbReference type="InterPro" id="IPR018253">
    <property type="entry name" value="DnaJ_domain_CS"/>
</dbReference>
<dbReference type="InterPro" id="IPR008971">
    <property type="entry name" value="HSP40/DnaJ_pept-bd"/>
</dbReference>
<dbReference type="InterPro" id="IPR001305">
    <property type="entry name" value="HSP_DnaJ_Cys-rich_dom"/>
</dbReference>
<dbReference type="InterPro" id="IPR036410">
    <property type="entry name" value="HSP_DnaJ_Cys-rich_dom_sf"/>
</dbReference>
<dbReference type="InterPro" id="IPR036869">
    <property type="entry name" value="J_dom_sf"/>
</dbReference>
<dbReference type="NCBIfam" id="TIGR02349">
    <property type="entry name" value="DnaJ_bact"/>
    <property type="match status" value="1"/>
</dbReference>
<dbReference type="NCBIfam" id="NF008035">
    <property type="entry name" value="PRK10767.1"/>
    <property type="match status" value="1"/>
</dbReference>
<dbReference type="PANTHER" id="PTHR43096:SF48">
    <property type="entry name" value="CHAPERONE PROTEIN DNAJ"/>
    <property type="match status" value="1"/>
</dbReference>
<dbReference type="PANTHER" id="PTHR43096">
    <property type="entry name" value="DNAJ HOMOLOG 1, MITOCHONDRIAL-RELATED"/>
    <property type="match status" value="1"/>
</dbReference>
<dbReference type="Pfam" id="PF00226">
    <property type="entry name" value="DnaJ"/>
    <property type="match status" value="1"/>
</dbReference>
<dbReference type="Pfam" id="PF01556">
    <property type="entry name" value="DnaJ_C"/>
    <property type="match status" value="1"/>
</dbReference>
<dbReference type="Pfam" id="PF00684">
    <property type="entry name" value="DnaJ_CXXCXGXG"/>
    <property type="match status" value="1"/>
</dbReference>
<dbReference type="PRINTS" id="PR00625">
    <property type="entry name" value="JDOMAIN"/>
</dbReference>
<dbReference type="SMART" id="SM00271">
    <property type="entry name" value="DnaJ"/>
    <property type="match status" value="1"/>
</dbReference>
<dbReference type="SUPFAM" id="SSF46565">
    <property type="entry name" value="Chaperone J-domain"/>
    <property type="match status" value="1"/>
</dbReference>
<dbReference type="SUPFAM" id="SSF57938">
    <property type="entry name" value="DnaJ/Hsp40 cysteine-rich domain"/>
    <property type="match status" value="1"/>
</dbReference>
<dbReference type="SUPFAM" id="SSF49493">
    <property type="entry name" value="HSP40/DnaJ peptide-binding domain"/>
    <property type="match status" value="2"/>
</dbReference>
<dbReference type="PROSITE" id="PS00636">
    <property type="entry name" value="DNAJ_1"/>
    <property type="match status" value="1"/>
</dbReference>
<dbReference type="PROSITE" id="PS50076">
    <property type="entry name" value="DNAJ_2"/>
    <property type="match status" value="1"/>
</dbReference>
<dbReference type="PROSITE" id="PS51188">
    <property type="entry name" value="ZF_CR"/>
    <property type="match status" value="1"/>
</dbReference>
<sequence>MAKQDYYETLGVQKGADEKEIKRAYKRLAMKYHPDRTNGDKAAEEKFKEVNEAYEILMDKEKRAAYDQYGHAAFEQGGFGGGAGGFGGGFGGFGGFEDIFSEMFGGGASRQRVVRGEDLRYDIEITLEEAVRGTTKDIKINTLAACDHCDGSGAEKGSKVETCPTCHGHGRVRRQQGFFMTETTCPTCQGSGKKIEKPCKHCHGDGRVHKKKNLSVKIPAGVDTGNQLRLSGEGAAGENGAPAGDLYVVIHVKDHHIFERDGSNLYCEVPISFTMAALGGEIEVPTLDGRVKLKIPAETQTGKLFRMRGKGVTSTRAGYAGDLICKIIVETPVKLNEEQKELLRKFEESLEGQSKQRPKSSSFLDGVKKFFDNLGK</sequence>
<name>DNAJ_MANSM</name>
<feature type="chain" id="PRO_0000070816" description="Chaperone protein DnaJ">
    <location>
        <begin position="1"/>
        <end position="376"/>
    </location>
</feature>
<feature type="domain" description="J" evidence="1">
    <location>
        <begin position="5"/>
        <end position="70"/>
    </location>
</feature>
<feature type="repeat" description="CXXCXGXG motif">
    <location>
        <begin position="146"/>
        <end position="153"/>
    </location>
</feature>
<feature type="repeat" description="CXXCXGXG motif">
    <location>
        <begin position="163"/>
        <end position="170"/>
    </location>
</feature>
<feature type="repeat" description="CXXCXGXG motif">
    <location>
        <begin position="185"/>
        <end position="192"/>
    </location>
</feature>
<feature type="repeat" description="CXXCXGXG motif">
    <location>
        <begin position="199"/>
        <end position="206"/>
    </location>
</feature>
<feature type="zinc finger region" description="CR-type" evidence="1">
    <location>
        <begin position="133"/>
        <end position="211"/>
    </location>
</feature>
<feature type="binding site" evidence="1">
    <location>
        <position position="146"/>
    </location>
    <ligand>
        <name>Zn(2+)</name>
        <dbReference type="ChEBI" id="CHEBI:29105"/>
        <label>1</label>
    </ligand>
</feature>
<feature type="binding site" evidence="1">
    <location>
        <position position="149"/>
    </location>
    <ligand>
        <name>Zn(2+)</name>
        <dbReference type="ChEBI" id="CHEBI:29105"/>
        <label>1</label>
    </ligand>
</feature>
<feature type="binding site" evidence="1">
    <location>
        <position position="163"/>
    </location>
    <ligand>
        <name>Zn(2+)</name>
        <dbReference type="ChEBI" id="CHEBI:29105"/>
        <label>2</label>
    </ligand>
</feature>
<feature type="binding site" evidence="1">
    <location>
        <position position="166"/>
    </location>
    <ligand>
        <name>Zn(2+)</name>
        <dbReference type="ChEBI" id="CHEBI:29105"/>
        <label>2</label>
    </ligand>
</feature>
<feature type="binding site" evidence="1">
    <location>
        <position position="185"/>
    </location>
    <ligand>
        <name>Zn(2+)</name>
        <dbReference type="ChEBI" id="CHEBI:29105"/>
        <label>2</label>
    </ligand>
</feature>
<feature type="binding site" evidence="1">
    <location>
        <position position="188"/>
    </location>
    <ligand>
        <name>Zn(2+)</name>
        <dbReference type="ChEBI" id="CHEBI:29105"/>
        <label>2</label>
    </ligand>
</feature>
<feature type="binding site" evidence="1">
    <location>
        <position position="199"/>
    </location>
    <ligand>
        <name>Zn(2+)</name>
        <dbReference type="ChEBI" id="CHEBI:29105"/>
        <label>1</label>
    </ligand>
</feature>
<feature type="binding site" evidence="1">
    <location>
        <position position="202"/>
    </location>
    <ligand>
        <name>Zn(2+)</name>
        <dbReference type="ChEBI" id="CHEBI:29105"/>
        <label>1</label>
    </ligand>
</feature>
<organism>
    <name type="scientific">Mannheimia succiniciproducens (strain KCTC 0769BP / MBEL55E)</name>
    <dbReference type="NCBI Taxonomy" id="221988"/>
    <lineage>
        <taxon>Bacteria</taxon>
        <taxon>Pseudomonadati</taxon>
        <taxon>Pseudomonadota</taxon>
        <taxon>Gammaproteobacteria</taxon>
        <taxon>Pasteurellales</taxon>
        <taxon>Pasteurellaceae</taxon>
        <taxon>Basfia</taxon>
    </lineage>
</organism>
<protein>
    <recommendedName>
        <fullName evidence="1">Chaperone protein DnaJ</fullName>
    </recommendedName>
</protein>
<gene>
    <name evidence="1" type="primary">dnaJ</name>
    <name type="ordered locus">MS0899</name>
</gene>
<evidence type="ECO:0000255" key="1">
    <source>
        <dbReference type="HAMAP-Rule" id="MF_01152"/>
    </source>
</evidence>
<evidence type="ECO:0000305" key="2"/>
<proteinExistence type="inferred from homology"/>
<keyword id="KW-0143">Chaperone</keyword>
<keyword id="KW-0963">Cytoplasm</keyword>
<keyword id="KW-0235">DNA replication</keyword>
<keyword id="KW-0479">Metal-binding</keyword>
<keyword id="KW-0677">Repeat</keyword>
<keyword id="KW-0346">Stress response</keyword>
<keyword id="KW-0862">Zinc</keyword>
<keyword id="KW-0863">Zinc-finger</keyword>
<comment type="function">
    <text evidence="1">Participates actively in the response to hyperosmotic and heat shock by preventing the aggregation of stress-denatured proteins and by disaggregating proteins, also in an autonomous, DnaK-independent fashion. Unfolded proteins bind initially to DnaJ; upon interaction with the DnaJ-bound protein, DnaK hydrolyzes its bound ATP, resulting in the formation of a stable complex. GrpE releases ADP from DnaK; ATP binding to DnaK triggers the release of the substrate protein, thus completing the reaction cycle. Several rounds of ATP-dependent interactions between DnaJ, DnaK and GrpE are required for fully efficient folding. Also involved, together with DnaK and GrpE, in the DNA replication of plasmids through activation of initiation proteins.</text>
</comment>
<comment type="cofactor">
    <cofactor evidence="1">
        <name>Zn(2+)</name>
        <dbReference type="ChEBI" id="CHEBI:29105"/>
    </cofactor>
    <text evidence="1">Binds 2 Zn(2+) ions per monomer.</text>
</comment>
<comment type="subunit">
    <text evidence="1">Homodimer.</text>
</comment>
<comment type="subcellular location">
    <subcellularLocation>
        <location evidence="1">Cytoplasm</location>
    </subcellularLocation>
</comment>
<comment type="domain">
    <text evidence="1">The J domain is necessary and sufficient to stimulate DnaK ATPase activity. Zinc center 1 plays an important role in the autonomous, DnaK-independent chaperone activity of DnaJ. Zinc center 2 is essential for interaction with DnaK and for DnaJ activity.</text>
</comment>
<comment type="similarity">
    <text evidence="1">Belongs to the DnaJ family.</text>
</comment>
<comment type="sequence caution" evidence="2">
    <conflict type="erroneous initiation">
        <sequence resource="EMBL-CDS" id="AAU37506"/>
    </conflict>
</comment>
<reference key="1">
    <citation type="journal article" date="2004" name="Nat. Biotechnol.">
        <title>The genome sequence of the capnophilic rumen bacterium Mannheimia succiniciproducens.</title>
        <authorList>
            <person name="Hong S.H."/>
            <person name="Kim J.S."/>
            <person name="Lee S.Y."/>
            <person name="In Y.H."/>
            <person name="Choi S.S."/>
            <person name="Rih J.-K."/>
            <person name="Kim C.H."/>
            <person name="Jeong H."/>
            <person name="Hur C.G."/>
            <person name="Kim J.J."/>
        </authorList>
    </citation>
    <scope>NUCLEOTIDE SEQUENCE [LARGE SCALE GENOMIC DNA]</scope>
    <source>
        <strain>KCTC 0769BP / MBEL55E</strain>
    </source>
</reference>
<accession>Q65U54</accession>